<keyword id="KW-0007">Acetylation</keyword>
<keyword id="KW-0903">Direct protein sequencing</keyword>
<keyword id="KW-0560">Oxidoreductase</keyword>
<keyword id="KW-0597">Phosphoprotein</keyword>
<keyword id="KW-1267">Proteomics identification</keyword>
<keyword id="KW-1185">Reference proteome</keyword>
<comment type="similarity">
    <text evidence="2">Belongs to the saccharopine dehydrogenase family.</text>
</comment>
<gene>
    <name type="primary">SCCPDH</name>
    <name type="ORF">CGI-49</name>
</gene>
<sequence length="429" mass="47151">MATEQRPFHLVVFGASGFTGQFVTEEVAREQVDPERSSRLPWAVAGRSREKLQRVLEKAALKLGRPTLSSEVGIIICDIANPASLDEMAKQATVVLNCVGPYRFYGEPVIKACIENGASCIDISGEPQFLELMQLKYHEKAADKGVYIIGSSGFDSIPADLGVIYTRNKMNGTLTAVESFLTIHSGPEGLSIHDGTWKSAIYGFGDQSNLRKLRNVSNLKPVPLIGPKLKRRWPISYCRELKGYSIPFMGSDVSVVRRTQRYLYENLEESPVQYAAYVTVGGITSVIKLMFAGLFFLFFVRFGIGRQLLIKFPWFFSFGYFSKQGPTQKQIDAASFTLTFFGQGYSQGTGTDKNKPNIKICTQVKGPEAGYVATPIAMVQAAMTLLSDASHLPKAGGVFTPGAAFSKTKLIDRLNKHGIEFSVISSSEV</sequence>
<name>SCPDL_HUMAN</name>
<feature type="initiator methionine" description="Removed" evidence="1">
    <location>
        <position position="1"/>
    </location>
</feature>
<feature type="chain" id="PRO_0000212840" description="Saccharopine dehydrogenase-like oxidoreductase">
    <location>
        <begin position="2"/>
        <end position="429"/>
    </location>
</feature>
<feature type="modified residue" description="N-acetylalanine" evidence="1">
    <location>
        <position position="2"/>
    </location>
</feature>
<feature type="modified residue" description="Phosphoserine" evidence="3">
    <location>
        <position position="217"/>
    </location>
</feature>
<feature type="sequence variant" id="VAR_034486" description="In dbSNP:rs7779.">
    <original>G</original>
    <variation>R</variation>
    <location>
        <position position="418"/>
    </location>
</feature>
<feature type="sequence conflict" description="In Ref. 1; AAD34044." evidence="2" ref="1">
    <original>SSRLPWA</original>
    <variation>TQPALG</variation>
    <location>
        <begin position="37"/>
        <end position="43"/>
    </location>
</feature>
<feature type="sequence conflict" description="In Ref. 4; AAH26185." evidence="2" ref="4">
    <original>P</original>
    <variation>H</variation>
    <location>
        <position position="187"/>
    </location>
</feature>
<feature type="sequence conflict" description="In Ref. 4; AAH26185." evidence="2" ref="4">
    <original>Q</original>
    <variation>R</variation>
    <location>
        <position position="347"/>
    </location>
</feature>
<accession>Q8NBX0</accession>
<accession>Q8TAR0</accession>
<accession>Q9Y363</accession>
<organism>
    <name type="scientific">Homo sapiens</name>
    <name type="common">Human</name>
    <dbReference type="NCBI Taxonomy" id="9606"/>
    <lineage>
        <taxon>Eukaryota</taxon>
        <taxon>Metazoa</taxon>
        <taxon>Chordata</taxon>
        <taxon>Craniata</taxon>
        <taxon>Vertebrata</taxon>
        <taxon>Euteleostomi</taxon>
        <taxon>Mammalia</taxon>
        <taxon>Eutheria</taxon>
        <taxon>Euarchontoglires</taxon>
        <taxon>Primates</taxon>
        <taxon>Haplorrhini</taxon>
        <taxon>Catarrhini</taxon>
        <taxon>Hominidae</taxon>
        <taxon>Homo</taxon>
    </lineage>
</organism>
<proteinExistence type="evidence at protein level"/>
<evidence type="ECO:0000269" key="1">
    <source ref="5"/>
</evidence>
<evidence type="ECO:0000305" key="2"/>
<evidence type="ECO:0007744" key="3">
    <source>
    </source>
</evidence>
<dbReference type="EC" id="1.-.-.-"/>
<dbReference type="EMBL" id="AF151807">
    <property type="protein sequence ID" value="AAD34044.1"/>
    <property type="molecule type" value="mRNA"/>
</dbReference>
<dbReference type="EMBL" id="AK075178">
    <property type="protein sequence ID" value="BAC11453.1"/>
    <property type="molecule type" value="mRNA"/>
</dbReference>
<dbReference type="EMBL" id="AL591848">
    <property type="status" value="NOT_ANNOTATED_CDS"/>
    <property type="molecule type" value="Genomic_DNA"/>
</dbReference>
<dbReference type="EMBL" id="BC026185">
    <property type="protein sequence ID" value="AAH26185.1"/>
    <property type="molecule type" value="mRNA"/>
</dbReference>
<dbReference type="CCDS" id="CCDS31084.1"/>
<dbReference type="RefSeq" id="NP_057086.2">
    <property type="nucleotide sequence ID" value="NM_016002.3"/>
</dbReference>
<dbReference type="SMR" id="Q8NBX0"/>
<dbReference type="BioGRID" id="119286">
    <property type="interactions" value="195"/>
</dbReference>
<dbReference type="FunCoup" id="Q8NBX0">
    <property type="interactions" value="751"/>
</dbReference>
<dbReference type="IntAct" id="Q8NBX0">
    <property type="interactions" value="81"/>
</dbReference>
<dbReference type="MINT" id="Q8NBX0"/>
<dbReference type="STRING" id="9606.ENSP00000355467"/>
<dbReference type="GlyGen" id="Q8NBX0">
    <property type="glycosylation" value="2 sites, 1 O-linked glycan (1 site)"/>
</dbReference>
<dbReference type="iPTMnet" id="Q8NBX0"/>
<dbReference type="PhosphoSitePlus" id="Q8NBX0"/>
<dbReference type="SwissPalm" id="Q8NBX0"/>
<dbReference type="BioMuta" id="SCCPDH"/>
<dbReference type="DMDM" id="73919294"/>
<dbReference type="jPOST" id="Q8NBX0"/>
<dbReference type="MassIVE" id="Q8NBX0"/>
<dbReference type="PaxDb" id="9606-ENSP00000355467"/>
<dbReference type="PeptideAtlas" id="Q8NBX0"/>
<dbReference type="ProteomicsDB" id="72832"/>
<dbReference type="Pumba" id="Q8NBX0"/>
<dbReference type="TopDownProteomics" id="Q8NBX0"/>
<dbReference type="Antibodypedia" id="34722">
    <property type="antibodies" value="131 antibodies from 26 providers"/>
</dbReference>
<dbReference type="DNASU" id="51097"/>
<dbReference type="Ensembl" id="ENST00000366510.4">
    <property type="protein sequence ID" value="ENSP00000355467.3"/>
    <property type="gene ID" value="ENSG00000143653.10"/>
</dbReference>
<dbReference type="GeneID" id="51097"/>
<dbReference type="KEGG" id="hsa:51097"/>
<dbReference type="MANE-Select" id="ENST00000366510.4">
    <property type="protein sequence ID" value="ENSP00000355467.3"/>
    <property type="RefSeq nucleotide sequence ID" value="NM_016002.3"/>
    <property type="RefSeq protein sequence ID" value="NP_057086.2"/>
</dbReference>
<dbReference type="UCSC" id="uc001ibr.4">
    <property type="organism name" value="human"/>
</dbReference>
<dbReference type="AGR" id="HGNC:24275"/>
<dbReference type="CTD" id="51097"/>
<dbReference type="DisGeNET" id="51097"/>
<dbReference type="GeneCards" id="SCCPDH"/>
<dbReference type="HGNC" id="HGNC:24275">
    <property type="gene designation" value="SCCPDH"/>
</dbReference>
<dbReference type="HPA" id="ENSG00000143653">
    <property type="expression patterns" value="Low tissue specificity"/>
</dbReference>
<dbReference type="MIM" id="620831">
    <property type="type" value="gene"/>
</dbReference>
<dbReference type="neXtProt" id="NX_Q8NBX0"/>
<dbReference type="OpenTargets" id="ENSG00000143653"/>
<dbReference type="PharmGKB" id="PA142670949"/>
<dbReference type="VEuPathDB" id="HostDB:ENSG00000143653"/>
<dbReference type="eggNOG" id="KOG2733">
    <property type="taxonomic scope" value="Eukaryota"/>
</dbReference>
<dbReference type="GeneTree" id="ENSGT00390000004799"/>
<dbReference type="HOGENOM" id="CLU_031002_1_0_1"/>
<dbReference type="InParanoid" id="Q8NBX0"/>
<dbReference type="OMA" id="MQLRYHD"/>
<dbReference type="OrthoDB" id="10268090at2759"/>
<dbReference type="PAN-GO" id="Q8NBX0">
    <property type="GO annotations" value="2 GO annotations based on evolutionary models"/>
</dbReference>
<dbReference type="PhylomeDB" id="Q8NBX0"/>
<dbReference type="TreeFam" id="TF314904"/>
<dbReference type="PathwayCommons" id="Q8NBX0"/>
<dbReference type="Reactome" id="R-HSA-114608">
    <property type="pathway name" value="Platelet degranulation"/>
</dbReference>
<dbReference type="SignaLink" id="Q8NBX0"/>
<dbReference type="BioGRID-ORCS" id="51097">
    <property type="hits" value="8 hits in 1164 CRISPR screens"/>
</dbReference>
<dbReference type="CD-CODE" id="FB4E32DD">
    <property type="entry name" value="Presynaptic clusters and postsynaptic densities"/>
</dbReference>
<dbReference type="ChiTaRS" id="SCCPDH">
    <property type="organism name" value="human"/>
</dbReference>
<dbReference type="GenomeRNAi" id="51097"/>
<dbReference type="Pharos" id="Q8NBX0">
    <property type="development level" value="Tbio"/>
</dbReference>
<dbReference type="PRO" id="PR:Q8NBX0"/>
<dbReference type="Proteomes" id="UP000005640">
    <property type="component" value="Chromosome 1"/>
</dbReference>
<dbReference type="RNAct" id="Q8NBX0">
    <property type="molecule type" value="protein"/>
</dbReference>
<dbReference type="Bgee" id="ENSG00000143653">
    <property type="expression patterns" value="Expressed in left testis and 197 other cell types or tissues"/>
</dbReference>
<dbReference type="ExpressionAtlas" id="Q8NBX0">
    <property type="expression patterns" value="baseline and differential"/>
</dbReference>
<dbReference type="GO" id="GO:0005576">
    <property type="term" value="C:extracellular region"/>
    <property type="evidence" value="ECO:0000304"/>
    <property type="project" value="Reactome"/>
</dbReference>
<dbReference type="GO" id="GO:0005811">
    <property type="term" value="C:lipid droplet"/>
    <property type="evidence" value="ECO:0000314"/>
    <property type="project" value="UniProtKB"/>
</dbReference>
<dbReference type="GO" id="GO:0016020">
    <property type="term" value="C:membrane"/>
    <property type="evidence" value="ECO:0007005"/>
    <property type="project" value="UniProtKB"/>
</dbReference>
<dbReference type="GO" id="GO:0030496">
    <property type="term" value="C:midbody"/>
    <property type="evidence" value="ECO:0000314"/>
    <property type="project" value="UniProtKB"/>
</dbReference>
<dbReference type="GO" id="GO:0005739">
    <property type="term" value="C:mitochondrion"/>
    <property type="evidence" value="ECO:0007005"/>
    <property type="project" value="UniProtKB"/>
</dbReference>
<dbReference type="GO" id="GO:0005634">
    <property type="term" value="C:nucleus"/>
    <property type="evidence" value="ECO:0007005"/>
    <property type="project" value="UniProtKB"/>
</dbReference>
<dbReference type="GO" id="GO:0031093">
    <property type="term" value="C:platelet alpha granule lumen"/>
    <property type="evidence" value="ECO:0000304"/>
    <property type="project" value="Reactome"/>
</dbReference>
<dbReference type="GO" id="GO:0016491">
    <property type="term" value="F:oxidoreductase activity"/>
    <property type="evidence" value="ECO:0007669"/>
    <property type="project" value="UniProtKB-KW"/>
</dbReference>
<dbReference type="GO" id="GO:0009247">
    <property type="term" value="P:glycolipid biosynthetic process"/>
    <property type="evidence" value="ECO:0000318"/>
    <property type="project" value="GO_Central"/>
</dbReference>
<dbReference type="FunFam" id="3.40.50.720:FF:000178">
    <property type="entry name" value="Saccharopine dehydrogenase-like oxidoreductase"/>
    <property type="match status" value="1"/>
</dbReference>
<dbReference type="Gene3D" id="3.40.50.720">
    <property type="entry name" value="NAD(P)-binding Rossmann-like Domain"/>
    <property type="match status" value="1"/>
</dbReference>
<dbReference type="InterPro" id="IPR036291">
    <property type="entry name" value="NAD(P)-bd_dom_sf"/>
</dbReference>
<dbReference type="InterPro" id="IPR051276">
    <property type="entry name" value="Saccharopine_DH-like_oxidrdct"/>
</dbReference>
<dbReference type="InterPro" id="IPR005097">
    <property type="entry name" value="Sacchrp_dh_NADP-bd"/>
</dbReference>
<dbReference type="PANTHER" id="PTHR12286">
    <property type="entry name" value="SACCHAROPINE DEHYDROGENASE-LIKE OXIDOREDUCTASE"/>
    <property type="match status" value="1"/>
</dbReference>
<dbReference type="PANTHER" id="PTHR12286:SF5">
    <property type="entry name" value="SACCHAROPINE DEHYDROGENASE-LIKE OXIDOREDUCTASE"/>
    <property type="match status" value="1"/>
</dbReference>
<dbReference type="Pfam" id="PF03435">
    <property type="entry name" value="Sacchrp_dh_NADP"/>
    <property type="match status" value="1"/>
</dbReference>
<dbReference type="SUPFAM" id="SSF51735">
    <property type="entry name" value="NAD(P)-binding Rossmann-fold domains"/>
    <property type="match status" value="1"/>
</dbReference>
<reference key="1">
    <citation type="journal article" date="2000" name="Genome Res.">
        <title>Identification of novel human genes evolutionarily conserved in Caenorhabditis elegans by comparative proteomics.</title>
        <authorList>
            <person name="Lai C.-H."/>
            <person name="Chou C.-Y."/>
            <person name="Ch'ang L.-Y."/>
            <person name="Liu C.-S."/>
            <person name="Lin W.-C."/>
        </authorList>
    </citation>
    <scope>NUCLEOTIDE SEQUENCE [LARGE SCALE MRNA]</scope>
</reference>
<reference key="2">
    <citation type="journal article" date="2004" name="Nat. Genet.">
        <title>Complete sequencing and characterization of 21,243 full-length human cDNAs.</title>
        <authorList>
            <person name="Ota T."/>
            <person name="Suzuki Y."/>
            <person name="Nishikawa T."/>
            <person name="Otsuki T."/>
            <person name="Sugiyama T."/>
            <person name="Irie R."/>
            <person name="Wakamatsu A."/>
            <person name="Hayashi K."/>
            <person name="Sato H."/>
            <person name="Nagai K."/>
            <person name="Kimura K."/>
            <person name="Makita H."/>
            <person name="Sekine M."/>
            <person name="Obayashi M."/>
            <person name="Nishi T."/>
            <person name="Shibahara T."/>
            <person name="Tanaka T."/>
            <person name="Ishii S."/>
            <person name="Yamamoto J."/>
            <person name="Saito K."/>
            <person name="Kawai Y."/>
            <person name="Isono Y."/>
            <person name="Nakamura Y."/>
            <person name="Nagahari K."/>
            <person name="Murakami K."/>
            <person name="Yasuda T."/>
            <person name="Iwayanagi T."/>
            <person name="Wagatsuma M."/>
            <person name="Shiratori A."/>
            <person name="Sudo H."/>
            <person name="Hosoiri T."/>
            <person name="Kaku Y."/>
            <person name="Kodaira H."/>
            <person name="Kondo H."/>
            <person name="Sugawara M."/>
            <person name="Takahashi M."/>
            <person name="Kanda K."/>
            <person name="Yokoi T."/>
            <person name="Furuya T."/>
            <person name="Kikkawa E."/>
            <person name="Omura Y."/>
            <person name="Abe K."/>
            <person name="Kamihara K."/>
            <person name="Katsuta N."/>
            <person name="Sato K."/>
            <person name="Tanikawa M."/>
            <person name="Yamazaki M."/>
            <person name="Ninomiya K."/>
            <person name="Ishibashi T."/>
            <person name="Yamashita H."/>
            <person name="Murakawa K."/>
            <person name="Fujimori K."/>
            <person name="Tanai H."/>
            <person name="Kimata M."/>
            <person name="Watanabe M."/>
            <person name="Hiraoka S."/>
            <person name="Chiba Y."/>
            <person name="Ishida S."/>
            <person name="Ono Y."/>
            <person name="Takiguchi S."/>
            <person name="Watanabe S."/>
            <person name="Yosida M."/>
            <person name="Hotuta T."/>
            <person name="Kusano J."/>
            <person name="Kanehori K."/>
            <person name="Takahashi-Fujii A."/>
            <person name="Hara H."/>
            <person name="Tanase T.-O."/>
            <person name="Nomura Y."/>
            <person name="Togiya S."/>
            <person name="Komai F."/>
            <person name="Hara R."/>
            <person name="Takeuchi K."/>
            <person name="Arita M."/>
            <person name="Imose N."/>
            <person name="Musashino K."/>
            <person name="Yuuki H."/>
            <person name="Oshima A."/>
            <person name="Sasaki N."/>
            <person name="Aotsuka S."/>
            <person name="Yoshikawa Y."/>
            <person name="Matsunawa H."/>
            <person name="Ichihara T."/>
            <person name="Shiohata N."/>
            <person name="Sano S."/>
            <person name="Moriya S."/>
            <person name="Momiyama H."/>
            <person name="Satoh N."/>
            <person name="Takami S."/>
            <person name="Terashima Y."/>
            <person name="Suzuki O."/>
            <person name="Nakagawa S."/>
            <person name="Senoh A."/>
            <person name="Mizoguchi H."/>
            <person name="Goto Y."/>
            <person name="Shimizu F."/>
            <person name="Wakebe H."/>
            <person name="Hishigaki H."/>
            <person name="Watanabe T."/>
            <person name="Sugiyama A."/>
            <person name="Takemoto M."/>
            <person name="Kawakami B."/>
            <person name="Yamazaki M."/>
            <person name="Watanabe K."/>
            <person name="Kumagai A."/>
            <person name="Itakura S."/>
            <person name="Fukuzumi Y."/>
            <person name="Fujimori Y."/>
            <person name="Komiyama M."/>
            <person name="Tashiro H."/>
            <person name="Tanigami A."/>
            <person name="Fujiwara T."/>
            <person name="Ono T."/>
            <person name="Yamada K."/>
            <person name="Fujii Y."/>
            <person name="Ozaki K."/>
            <person name="Hirao M."/>
            <person name="Ohmori Y."/>
            <person name="Kawabata A."/>
            <person name="Hikiji T."/>
            <person name="Kobatake N."/>
            <person name="Inagaki H."/>
            <person name="Ikema Y."/>
            <person name="Okamoto S."/>
            <person name="Okitani R."/>
            <person name="Kawakami T."/>
            <person name="Noguchi S."/>
            <person name="Itoh T."/>
            <person name="Shigeta K."/>
            <person name="Senba T."/>
            <person name="Matsumura K."/>
            <person name="Nakajima Y."/>
            <person name="Mizuno T."/>
            <person name="Morinaga M."/>
            <person name="Sasaki M."/>
            <person name="Togashi T."/>
            <person name="Oyama M."/>
            <person name="Hata H."/>
            <person name="Watanabe M."/>
            <person name="Komatsu T."/>
            <person name="Mizushima-Sugano J."/>
            <person name="Satoh T."/>
            <person name="Shirai Y."/>
            <person name="Takahashi Y."/>
            <person name="Nakagawa K."/>
            <person name="Okumura K."/>
            <person name="Nagase T."/>
            <person name="Nomura N."/>
            <person name="Kikuchi H."/>
            <person name="Masuho Y."/>
            <person name="Yamashita R."/>
            <person name="Nakai K."/>
            <person name="Yada T."/>
            <person name="Nakamura Y."/>
            <person name="Ohara O."/>
            <person name="Isogai T."/>
            <person name="Sugano S."/>
        </authorList>
    </citation>
    <scope>NUCLEOTIDE SEQUENCE [LARGE SCALE MRNA]</scope>
    <source>
        <tissue>Placenta</tissue>
    </source>
</reference>
<reference key="3">
    <citation type="journal article" date="2006" name="Nature">
        <title>The DNA sequence and biological annotation of human chromosome 1.</title>
        <authorList>
            <person name="Gregory S.G."/>
            <person name="Barlow K.F."/>
            <person name="McLay K.E."/>
            <person name="Kaul R."/>
            <person name="Swarbreck D."/>
            <person name="Dunham A."/>
            <person name="Scott C.E."/>
            <person name="Howe K.L."/>
            <person name="Woodfine K."/>
            <person name="Spencer C.C.A."/>
            <person name="Jones M.C."/>
            <person name="Gillson C."/>
            <person name="Searle S."/>
            <person name="Zhou Y."/>
            <person name="Kokocinski F."/>
            <person name="McDonald L."/>
            <person name="Evans R."/>
            <person name="Phillips K."/>
            <person name="Atkinson A."/>
            <person name="Cooper R."/>
            <person name="Jones C."/>
            <person name="Hall R.E."/>
            <person name="Andrews T.D."/>
            <person name="Lloyd C."/>
            <person name="Ainscough R."/>
            <person name="Almeida J.P."/>
            <person name="Ambrose K.D."/>
            <person name="Anderson F."/>
            <person name="Andrew R.W."/>
            <person name="Ashwell R.I.S."/>
            <person name="Aubin K."/>
            <person name="Babbage A.K."/>
            <person name="Bagguley C.L."/>
            <person name="Bailey J."/>
            <person name="Beasley H."/>
            <person name="Bethel G."/>
            <person name="Bird C.P."/>
            <person name="Bray-Allen S."/>
            <person name="Brown J.Y."/>
            <person name="Brown A.J."/>
            <person name="Buckley D."/>
            <person name="Burton J."/>
            <person name="Bye J."/>
            <person name="Carder C."/>
            <person name="Chapman J.C."/>
            <person name="Clark S.Y."/>
            <person name="Clarke G."/>
            <person name="Clee C."/>
            <person name="Cobley V."/>
            <person name="Collier R.E."/>
            <person name="Corby N."/>
            <person name="Coville G.J."/>
            <person name="Davies J."/>
            <person name="Deadman R."/>
            <person name="Dunn M."/>
            <person name="Earthrowl M."/>
            <person name="Ellington A.G."/>
            <person name="Errington H."/>
            <person name="Frankish A."/>
            <person name="Frankland J."/>
            <person name="French L."/>
            <person name="Garner P."/>
            <person name="Garnett J."/>
            <person name="Gay L."/>
            <person name="Ghori M.R.J."/>
            <person name="Gibson R."/>
            <person name="Gilby L.M."/>
            <person name="Gillett W."/>
            <person name="Glithero R.J."/>
            <person name="Grafham D.V."/>
            <person name="Griffiths C."/>
            <person name="Griffiths-Jones S."/>
            <person name="Grocock R."/>
            <person name="Hammond S."/>
            <person name="Harrison E.S.I."/>
            <person name="Hart E."/>
            <person name="Haugen E."/>
            <person name="Heath P.D."/>
            <person name="Holmes S."/>
            <person name="Holt K."/>
            <person name="Howden P.J."/>
            <person name="Hunt A.R."/>
            <person name="Hunt S.E."/>
            <person name="Hunter G."/>
            <person name="Isherwood J."/>
            <person name="James R."/>
            <person name="Johnson C."/>
            <person name="Johnson D."/>
            <person name="Joy A."/>
            <person name="Kay M."/>
            <person name="Kershaw J.K."/>
            <person name="Kibukawa M."/>
            <person name="Kimberley A.M."/>
            <person name="King A."/>
            <person name="Knights A.J."/>
            <person name="Lad H."/>
            <person name="Laird G."/>
            <person name="Lawlor S."/>
            <person name="Leongamornlert D.A."/>
            <person name="Lloyd D.M."/>
            <person name="Loveland J."/>
            <person name="Lovell J."/>
            <person name="Lush M.J."/>
            <person name="Lyne R."/>
            <person name="Martin S."/>
            <person name="Mashreghi-Mohammadi M."/>
            <person name="Matthews L."/>
            <person name="Matthews N.S.W."/>
            <person name="McLaren S."/>
            <person name="Milne S."/>
            <person name="Mistry S."/>
            <person name="Moore M.J.F."/>
            <person name="Nickerson T."/>
            <person name="O'Dell C.N."/>
            <person name="Oliver K."/>
            <person name="Palmeiri A."/>
            <person name="Palmer S.A."/>
            <person name="Parker A."/>
            <person name="Patel D."/>
            <person name="Pearce A.V."/>
            <person name="Peck A.I."/>
            <person name="Pelan S."/>
            <person name="Phelps K."/>
            <person name="Phillimore B.J."/>
            <person name="Plumb R."/>
            <person name="Rajan J."/>
            <person name="Raymond C."/>
            <person name="Rouse G."/>
            <person name="Saenphimmachak C."/>
            <person name="Sehra H.K."/>
            <person name="Sheridan E."/>
            <person name="Shownkeen R."/>
            <person name="Sims S."/>
            <person name="Skuce C.D."/>
            <person name="Smith M."/>
            <person name="Steward C."/>
            <person name="Subramanian S."/>
            <person name="Sycamore N."/>
            <person name="Tracey A."/>
            <person name="Tromans A."/>
            <person name="Van Helmond Z."/>
            <person name="Wall M."/>
            <person name="Wallis J.M."/>
            <person name="White S."/>
            <person name="Whitehead S.L."/>
            <person name="Wilkinson J.E."/>
            <person name="Willey D.L."/>
            <person name="Williams H."/>
            <person name="Wilming L."/>
            <person name="Wray P.W."/>
            <person name="Wu Z."/>
            <person name="Coulson A."/>
            <person name="Vaudin M."/>
            <person name="Sulston J.E."/>
            <person name="Durbin R.M."/>
            <person name="Hubbard T."/>
            <person name="Wooster R."/>
            <person name="Dunham I."/>
            <person name="Carter N.P."/>
            <person name="McVean G."/>
            <person name="Ross M.T."/>
            <person name="Harrow J."/>
            <person name="Olson M.V."/>
            <person name="Beck S."/>
            <person name="Rogers J."/>
            <person name="Bentley D.R."/>
        </authorList>
    </citation>
    <scope>NUCLEOTIDE SEQUENCE [LARGE SCALE GENOMIC DNA]</scope>
</reference>
<reference key="4">
    <citation type="journal article" date="2004" name="Genome Res.">
        <title>The status, quality, and expansion of the NIH full-length cDNA project: the Mammalian Gene Collection (MGC).</title>
        <authorList>
            <consortium name="The MGC Project Team"/>
        </authorList>
    </citation>
    <scope>NUCLEOTIDE SEQUENCE [LARGE SCALE MRNA]</scope>
    <source>
        <tissue>Brain</tissue>
    </source>
</reference>
<reference key="5">
    <citation type="submission" date="2010-01" db="UniProtKB">
        <authorList>
            <person name="Bienvenut W.V."/>
        </authorList>
    </citation>
    <scope>PROTEIN SEQUENCE OF 2-29; 63-103; 141-167; 199-211; 215-228; 243-257; 330-353; 366-394 AND 417-429</scope>
    <scope>CLEAVAGE OF INITIATOR METHIONINE</scope>
    <scope>ACETYLATION AT ALA-2</scope>
    <scope>IDENTIFICATION BY MASS SPECTROMETRY</scope>
    <source>
        <tissue>Ovarian carcinoma</tissue>
    </source>
</reference>
<reference key="6">
    <citation type="journal article" date="2011" name="BMC Syst. Biol.">
        <title>Initial characterization of the human central proteome.</title>
        <authorList>
            <person name="Burkard T.R."/>
            <person name="Planyavsky M."/>
            <person name="Kaupe I."/>
            <person name="Breitwieser F.P."/>
            <person name="Buerckstuemmer T."/>
            <person name="Bennett K.L."/>
            <person name="Superti-Furga G."/>
            <person name="Colinge J."/>
        </authorList>
    </citation>
    <scope>IDENTIFICATION BY MASS SPECTROMETRY [LARGE SCALE ANALYSIS]</scope>
</reference>
<reference key="7">
    <citation type="journal article" date="2013" name="J. Proteome Res.">
        <title>Toward a comprehensive characterization of a human cancer cell phosphoproteome.</title>
        <authorList>
            <person name="Zhou H."/>
            <person name="Di Palma S."/>
            <person name="Preisinger C."/>
            <person name="Peng M."/>
            <person name="Polat A.N."/>
            <person name="Heck A.J."/>
            <person name="Mohammed S."/>
        </authorList>
    </citation>
    <scope>PHOSPHORYLATION [LARGE SCALE ANALYSIS] AT SER-217</scope>
    <scope>IDENTIFICATION BY MASS SPECTROMETRY [LARGE SCALE ANALYSIS]</scope>
    <source>
        <tissue>Erythroleukemia</tissue>
    </source>
</reference>
<reference key="8">
    <citation type="journal article" date="2014" name="J. Proteomics">
        <title>An enzyme assisted RP-RPLC approach for in-depth analysis of human liver phosphoproteome.</title>
        <authorList>
            <person name="Bian Y."/>
            <person name="Song C."/>
            <person name="Cheng K."/>
            <person name="Dong M."/>
            <person name="Wang F."/>
            <person name="Huang J."/>
            <person name="Sun D."/>
            <person name="Wang L."/>
            <person name="Ye M."/>
            <person name="Zou H."/>
        </authorList>
    </citation>
    <scope>IDENTIFICATION BY MASS SPECTROMETRY [LARGE SCALE ANALYSIS]</scope>
    <source>
        <tissue>Liver</tissue>
    </source>
</reference>
<reference key="9">
    <citation type="journal article" date="2015" name="Proteomics">
        <title>N-terminome analysis of the human mitochondrial proteome.</title>
        <authorList>
            <person name="Vaca Jacome A.S."/>
            <person name="Rabilloud T."/>
            <person name="Schaeffer-Reiss C."/>
            <person name="Rompais M."/>
            <person name="Ayoub D."/>
            <person name="Lane L."/>
            <person name="Bairoch A."/>
            <person name="Van Dorsselaer A."/>
            <person name="Carapito C."/>
        </authorList>
    </citation>
    <scope>IDENTIFICATION BY MASS SPECTROMETRY [LARGE SCALE ANALYSIS]</scope>
</reference>
<protein>
    <recommendedName>
        <fullName>Saccharopine dehydrogenase-like oxidoreductase</fullName>
        <ecNumber>1.-.-.-</ecNumber>
    </recommendedName>
</protein>